<feature type="chain" id="PRO_1000007948" description="S-adenosylmethionine synthase">
    <location>
        <begin position="1"/>
        <end position="388"/>
    </location>
</feature>
<feature type="region of interest" description="Flexible loop" evidence="1">
    <location>
        <begin position="98"/>
        <end position="108"/>
    </location>
</feature>
<feature type="binding site" description="in other chain" evidence="1">
    <location>
        <position position="14"/>
    </location>
    <ligand>
        <name>ATP</name>
        <dbReference type="ChEBI" id="CHEBI:30616"/>
        <note>ligand shared between two neighboring subunits</note>
    </ligand>
</feature>
<feature type="binding site" evidence="1">
    <location>
        <position position="16"/>
    </location>
    <ligand>
        <name>Mg(2+)</name>
        <dbReference type="ChEBI" id="CHEBI:18420"/>
    </ligand>
</feature>
<feature type="binding site" evidence="1">
    <location>
        <position position="42"/>
    </location>
    <ligand>
        <name>K(+)</name>
        <dbReference type="ChEBI" id="CHEBI:29103"/>
    </ligand>
</feature>
<feature type="binding site" description="in other chain" evidence="1">
    <location>
        <position position="55"/>
    </location>
    <ligand>
        <name>L-methionine</name>
        <dbReference type="ChEBI" id="CHEBI:57844"/>
        <note>ligand shared between two neighboring subunits</note>
    </ligand>
</feature>
<feature type="binding site" description="in other chain" evidence="1">
    <location>
        <position position="98"/>
    </location>
    <ligand>
        <name>L-methionine</name>
        <dbReference type="ChEBI" id="CHEBI:57844"/>
        <note>ligand shared between two neighboring subunits</note>
    </ligand>
</feature>
<feature type="binding site" description="in other chain" evidence="1">
    <location>
        <begin position="166"/>
        <end position="168"/>
    </location>
    <ligand>
        <name>ATP</name>
        <dbReference type="ChEBI" id="CHEBI:30616"/>
        <note>ligand shared between two neighboring subunits</note>
    </ligand>
</feature>
<feature type="binding site" evidence="1">
    <location>
        <position position="242"/>
    </location>
    <ligand>
        <name>ATP</name>
        <dbReference type="ChEBI" id="CHEBI:30616"/>
        <note>ligand shared between two neighboring subunits</note>
    </ligand>
</feature>
<feature type="binding site" evidence="1">
    <location>
        <position position="242"/>
    </location>
    <ligand>
        <name>L-methionine</name>
        <dbReference type="ChEBI" id="CHEBI:57844"/>
        <note>ligand shared between two neighboring subunits</note>
    </ligand>
</feature>
<feature type="binding site" description="in other chain" evidence="1">
    <location>
        <begin position="248"/>
        <end position="249"/>
    </location>
    <ligand>
        <name>ATP</name>
        <dbReference type="ChEBI" id="CHEBI:30616"/>
        <note>ligand shared between two neighboring subunits</note>
    </ligand>
</feature>
<feature type="binding site" evidence="1">
    <location>
        <position position="265"/>
    </location>
    <ligand>
        <name>ATP</name>
        <dbReference type="ChEBI" id="CHEBI:30616"/>
        <note>ligand shared between two neighboring subunits</note>
    </ligand>
</feature>
<feature type="binding site" evidence="1">
    <location>
        <position position="269"/>
    </location>
    <ligand>
        <name>ATP</name>
        <dbReference type="ChEBI" id="CHEBI:30616"/>
        <note>ligand shared between two neighboring subunits</note>
    </ligand>
</feature>
<feature type="binding site" description="in other chain" evidence="1">
    <location>
        <position position="273"/>
    </location>
    <ligand>
        <name>L-methionine</name>
        <dbReference type="ChEBI" id="CHEBI:57844"/>
        <note>ligand shared between two neighboring subunits</note>
    </ligand>
</feature>
<reference key="1">
    <citation type="journal article" date="2006" name="Proc. Natl. Acad. Sci. U.S.A.">
        <title>Comparative genomics of the lactic acid bacteria.</title>
        <authorList>
            <person name="Makarova K.S."/>
            <person name="Slesarev A."/>
            <person name="Wolf Y.I."/>
            <person name="Sorokin A."/>
            <person name="Mirkin B."/>
            <person name="Koonin E.V."/>
            <person name="Pavlov A."/>
            <person name="Pavlova N."/>
            <person name="Karamychev V."/>
            <person name="Polouchine N."/>
            <person name="Shakhova V."/>
            <person name="Grigoriev I."/>
            <person name="Lou Y."/>
            <person name="Rohksar D."/>
            <person name="Lucas S."/>
            <person name="Huang K."/>
            <person name="Goodstein D.M."/>
            <person name="Hawkins T."/>
            <person name="Plengvidhya V."/>
            <person name="Welker D."/>
            <person name="Hughes J."/>
            <person name="Goh Y."/>
            <person name="Benson A."/>
            <person name="Baldwin K."/>
            <person name="Lee J.-H."/>
            <person name="Diaz-Muniz I."/>
            <person name="Dosti B."/>
            <person name="Smeianov V."/>
            <person name="Wechter W."/>
            <person name="Barabote R."/>
            <person name="Lorca G."/>
            <person name="Altermann E."/>
            <person name="Barrangou R."/>
            <person name="Ganesan B."/>
            <person name="Xie Y."/>
            <person name="Rawsthorne H."/>
            <person name="Tamir D."/>
            <person name="Parker C."/>
            <person name="Breidt F."/>
            <person name="Broadbent J.R."/>
            <person name="Hutkins R."/>
            <person name="O'Sullivan D."/>
            <person name="Steele J."/>
            <person name="Unlu G."/>
            <person name="Saier M.H. Jr."/>
            <person name="Klaenhammer T."/>
            <person name="Richardson P."/>
            <person name="Kozyavkin S."/>
            <person name="Weimer B.C."/>
            <person name="Mills D.A."/>
        </authorList>
    </citation>
    <scope>NUCLEOTIDE SEQUENCE [LARGE SCALE GENOMIC DNA]</scope>
    <source>
        <strain>ATCC BAA-331 / PSU-1</strain>
    </source>
</reference>
<organism>
    <name type="scientific">Oenococcus oeni (strain ATCC BAA-331 / PSU-1)</name>
    <dbReference type="NCBI Taxonomy" id="203123"/>
    <lineage>
        <taxon>Bacteria</taxon>
        <taxon>Bacillati</taxon>
        <taxon>Bacillota</taxon>
        <taxon>Bacilli</taxon>
        <taxon>Lactobacillales</taxon>
        <taxon>Lactobacillaceae</taxon>
        <taxon>Oenococcus</taxon>
    </lineage>
</organism>
<proteinExistence type="inferred from homology"/>
<protein>
    <recommendedName>
        <fullName evidence="1">S-adenosylmethionine synthase</fullName>
        <shortName evidence="1">AdoMet synthase</shortName>
        <ecNumber evidence="1">2.5.1.6</ecNumber>
    </recommendedName>
    <alternativeName>
        <fullName evidence="1">MAT</fullName>
    </alternativeName>
    <alternativeName>
        <fullName evidence="1">Methionine adenosyltransferase</fullName>
    </alternativeName>
</protein>
<dbReference type="EC" id="2.5.1.6" evidence="1"/>
<dbReference type="EMBL" id="CP000411">
    <property type="protein sequence ID" value="ABJ56759.1"/>
    <property type="molecule type" value="Genomic_DNA"/>
</dbReference>
<dbReference type="RefSeq" id="WP_002816583.1">
    <property type="nucleotide sequence ID" value="NC_008528.1"/>
</dbReference>
<dbReference type="SMR" id="Q04FL3"/>
<dbReference type="STRING" id="203123.OEOE_0838"/>
<dbReference type="GeneID" id="75066084"/>
<dbReference type="KEGG" id="ooe:OEOE_0838"/>
<dbReference type="eggNOG" id="COG0192">
    <property type="taxonomic scope" value="Bacteria"/>
</dbReference>
<dbReference type="HOGENOM" id="CLU_041802_1_1_9"/>
<dbReference type="UniPathway" id="UPA00315">
    <property type="reaction ID" value="UER00080"/>
</dbReference>
<dbReference type="Proteomes" id="UP000000774">
    <property type="component" value="Chromosome"/>
</dbReference>
<dbReference type="GO" id="GO:0005737">
    <property type="term" value="C:cytoplasm"/>
    <property type="evidence" value="ECO:0007669"/>
    <property type="project" value="UniProtKB-SubCell"/>
</dbReference>
<dbReference type="GO" id="GO:0005524">
    <property type="term" value="F:ATP binding"/>
    <property type="evidence" value="ECO:0007669"/>
    <property type="project" value="UniProtKB-UniRule"/>
</dbReference>
<dbReference type="GO" id="GO:0000287">
    <property type="term" value="F:magnesium ion binding"/>
    <property type="evidence" value="ECO:0007669"/>
    <property type="project" value="UniProtKB-UniRule"/>
</dbReference>
<dbReference type="GO" id="GO:0004478">
    <property type="term" value="F:methionine adenosyltransferase activity"/>
    <property type="evidence" value="ECO:0007669"/>
    <property type="project" value="UniProtKB-UniRule"/>
</dbReference>
<dbReference type="GO" id="GO:0006730">
    <property type="term" value="P:one-carbon metabolic process"/>
    <property type="evidence" value="ECO:0007669"/>
    <property type="project" value="UniProtKB-KW"/>
</dbReference>
<dbReference type="GO" id="GO:0006556">
    <property type="term" value="P:S-adenosylmethionine biosynthetic process"/>
    <property type="evidence" value="ECO:0007669"/>
    <property type="project" value="UniProtKB-UniRule"/>
</dbReference>
<dbReference type="CDD" id="cd18079">
    <property type="entry name" value="S-AdoMet_synt"/>
    <property type="match status" value="1"/>
</dbReference>
<dbReference type="FunFam" id="3.30.300.10:FF:000003">
    <property type="entry name" value="S-adenosylmethionine synthase"/>
    <property type="match status" value="1"/>
</dbReference>
<dbReference type="Gene3D" id="3.30.300.10">
    <property type="match status" value="3"/>
</dbReference>
<dbReference type="HAMAP" id="MF_00086">
    <property type="entry name" value="S_AdoMet_synth1"/>
    <property type="match status" value="1"/>
</dbReference>
<dbReference type="InterPro" id="IPR022631">
    <property type="entry name" value="ADOMET_SYNTHASE_CS"/>
</dbReference>
<dbReference type="InterPro" id="IPR022630">
    <property type="entry name" value="S-AdoMet_synt_C"/>
</dbReference>
<dbReference type="InterPro" id="IPR022629">
    <property type="entry name" value="S-AdoMet_synt_central"/>
</dbReference>
<dbReference type="InterPro" id="IPR022628">
    <property type="entry name" value="S-AdoMet_synt_N"/>
</dbReference>
<dbReference type="InterPro" id="IPR002133">
    <property type="entry name" value="S-AdoMet_synthetase"/>
</dbReference>
<dbReference type="InterPro" id="IPR022636">
    <property type="entry name" value="S-AdoMet_synthetase_sfam"/>
</dbReference>
<dbReference type="NCBIfam" id="TIGR01034">
    <property type="entry name" value="metK"/>
    <property type="match status" value="1"/>
</dbReference>
<dbReference type="PANTHER" id="PTHR11964">
    <property type="entry name" value="S-ADENOSYLMETHIONINE SYNTHETASE"/>
    <property type="match status" value="1"/>
</dbReference>
<dbReference type="Pfam" id="PF02773">
    <property type="entry name" value="S-AdoMet_synt_C"/>
    <property type="match status" value="1"/>
</dbReference>
<dbReference type="Pfam" id="PF02772">
    <property type="entry name" value="S-AdoMet_synt_M"/>
    <property type="match status" value="1"/>
</dbReference>
<dbReference type="Pfam" id="PF00438">
    <property type="entry name" value="S-AdoMet_synt_N"/>
    <property type="match status" value="1"/>
</dbReference>
<dbReference type="PIRSF" id="PIRSF000497">
    <property type="entry name" value="MAT"/>
    <property type="match status" value="1"/>
</dbReference>
<dbReference type="SUPFAM" id="SSF55973">
    <property type="entry name" value="S-adenosylmethionine synthetase"/>
    <property type="match status" value="3"/>
</dbReference>
<dbReference type="PROSITE" id="PS00376">
    <property type="entry name" value="ADOMET_SYNTHASE_1"/>
    <property type="match status" value="1"/>
</dbReference>
<dbReference type="PROSITE" id="PS00377">
    <property type="entry name" value="ADOMET_SYNTHASE_2"/>
    <property type="match status" value="1"/>
</dbReference>
<name>METK_OENOB</name>
<sequence length="388" mass="42196">MKKFFTSESVAIGHPDKIADQIADAILDEVLKQDPLARSAIEVTVSTGDVSIFGELSTKAYVNVRDVATDTIKKIGYIEPKLGFTYDSVNVSNKIVEQSAEISSAVDQAEDDPDQIGAGDQGIIYGYANNETSDYIPLALQLSHKLMKQLKTVREAGDSNSYLRPDGKGEVSVEYGDDNRPKRISAVVLSAQHIEGIELEDLRARISEDIIAPVLPTELVDENTKFFINPSGLWSLGGPQADSGLTGRKIIVDTYGGAAHHGGGAFSGKDATKVDRSGAYYARYVAKNLVAAGLADKLEIQVGYAIGVARPVSIDLDTFGTEKVSIDKIYSIVDQVFDFRPLSIINQLDLRRPIYLQTAAFGHFGRSDLDLPWEKLDQVEKIKALLAN</sequence>
<keyword id="KW-0067">ATP-binding</keyword>
<keyword id="KW-0963">Cytoplasm</keyword>
<keyword id="KW-0460">Magnesium</keyword>
<keyword id="KW-0479">Metal-binding</keyword>
<keyword id="KW-0547">Nucleotide-binding</keyword>
<keyword id="KW-0554">One-carbon metabolism</keyword>
<keyword id="KW-0630">Potassium</keyword>
<keyword id="KW-1185">Reference proteome</keyword>
<keyword id="KW-0808">Transferase</keyword>
<comment type="function">
    <text evidence="1">Catalyzes the formation of S-adenosylmethionine (AdoMet) from methionine and ATP. The overall synthetic reaction is composed of two sequential steps, AdoMet formation and the subsequent tripolyphosphate hydrolysis which occurs prior to release of AdoMet from the enzyme.</text>
</comment>
<comment type="catalytic activity">
    <reaction evidence="1">
        <text>L-methionine + ATP + H2O = S-adenosyl-L-methionine + phosphate + diphosphate</text>
        <dbReference type="Rhea" id="RHEA:21080"/>
        <dbReference type="ChEBI" id="CHEBI:15377"/>
        <dbReference type="ChEBI" id="CHEBI:30616"/>
        <dbReference type="ChEBI" id="CHEBI:33019"/>
        <dbReference type="ChEBI" id="CHEBI:43474"/>
        <dbReference type="ChEBI" id="CHEBI:57844"/>
        <dbReference type="ChEBI" id="CHEBI:59789"/>
        <dbReference type="EC" id="2.5.1.6"/>
    </reaction>
</comment>
<comment type="cofactor">
    <cofactor evidence="1">
        <name>Mg(2+)</name>
        <dbReference type="ChEBI" id="CHEBI:18420"/>
    </cofactor>
    <text evidence="1">Binds 2 divalent ions per subunit.</text>
</comment>
<comment type="cofactor">
    <cofactor evidence="1">
        <name>K(+)</name>
        <dbReference type="ChEBI" id="CHEBI:29103"/>
    </cofactor>
    <text evidence="1">Binds 1 potassium ion per subunit.</text>
</comment>
<comment type="pathway">
    <text evidence="1">Amino-acid biosynthesis; S-adenosyl-L-methionine biosynthesis; S-adenosyl-L-methionine from L-methionine: step 1/1.</text>
</comment>
<comment type="subunit">
    <text evidence="1">Homotetramer; dimer of dimers.</text>
</comment>
<comment type="subcellular location">
    <subcellularLocation>
        <location evidence="1">Cytoplasm</location>
    </subcellularLocation>
</comment>
<comment type="similarity">
    <text evidence="1">Belongs to the AdoMet synthase family.</text>
</comment>
<accession>Q04FL3</accession>
<gene>
    <name evidence="1" type="primary">metK</name>
    <name type="ordered locus">OEOE_0838</name>
</gene>
<evidence type="ECO:0000255" key="1">
    <source>
        <dbReference type="HAMAP-Rule" id="MF_00086"/>
    </source>
</evidence>